<proteinExistence type="inferred from homology"/>
<reference key="1">
    <citation type="journal article" date="2009" name="Genome Biol.">
        <title>Genomic and genetic analyses of diversity and plant interactions of Pseudomonas fluorescens.</title>
        <authorList>
            <person name="Silby M.W."/>
            <person name="Cerdeno-Tarraga A.M."/>
            <person name="Vernikos G.S."/>
            <person name="Giddens S.R."/>
            <person name="Jackson R.W."/>
            <person name="Preston G.M."/>
            <person name="Zhang X.-X."/>
            <person name="Moon C.D."/>
            <person name="Gehrig S.M."/>
            <person name="Godfrey S.A.C."/>
            <person name="Knight C.G."/>
            <person name="Malone J.G."/>
            <person name="Robinson Z."/>
            <person name="Spiers A.J."/>
            <person name="Harris S."/>
            <person name="Challis G.L."/>
            <person name="Yaxley A.M."/>
            <person name="Harris D."/>
            <person name="Seeger K."/>
            <person name="Murphy L."/>
            <person name="Rutter S."/>
            <person name="Squares R."/>
            <person name="Quail M.A."/>
            <person name="Saunders E."/>
            <person name="Mavromatis K."/>
            <person name="Brettin T.S."/>
            <person name="Bentley S.D."/>
            <person name="Hothersall J."/>
            <person name="Stephens E."/>
            <person name="Thomas C.M."/>
            <person name="Parkhill J."/>
            <person name="Levy S.B."/>
            <person name="Rainey P.B."/>
            <person name="Thomson N.R."/>
        </authorList>
    </citation>
    <scope>NUCLEOTIDE SEQUENCE [LARGE SCALE GENOMIC DNA]</scope>
    <source>
        <strain>Pf0-1</strain>
    </source>
</reference>
<protein>
    <recommendedName>
        <fullName evidence="1">Error-prone DNA polymerase</fullName>
        <ecNumber evidence="1">2.7.7.7</ecNumber>
    </recommendedName>
</protein>
<gene>
    <name evidence="1" type="primary">dnaE2</name>
    <name type="ordered locus">Pfl01_3149</name>
</gene>
<comment type="function">
    <text evidence="1">DNA polymerase involved in damage-induced mutagenesis and translesion synthesis (TLS). It is not the major replicative DNA polymerase.</text>
</comment>
<comment type="catalytic activity">
    <reaction evidence="1">
        <text>DNA(n) + a 2'-deoxyribonucleoside 5'-triphosphate = DNA(n+1) + diphosphate</text>
        <dbReference type="Rhea" id="RHEA:22508"/>
        <dbReference type="Rhea" id="RHEA-COMP:17339"/>
        <dbReference type="Rhea" id="RHEA-COMP:17340"/>
        <dbReference type="ChEBI" id="CHEBI:33019"/>
        <dbReference type="ChEBI" id="CHEBI:61560"/>
        <dbReference type="ChEBI" id="CHEBI:173112"/>
        <dbReference type="EC" id="2.7.7.7"/>
    </reaction>
</comment>
<comment type="subcellular location">
    <subcellularLocation>
        <location evidence="1">Cytoplasm</location>
    </subcellularLocation>
</comment>
<comment type="similarity">
    <text evidence="1">Belongs to the DNA polymerase type-C family. DnaE2 subfamily.</text>
</comment>
<accession>Q3KBG7</accession>
<keyword id="KW-0963">Cytoplasm</keyword>
<keyword id="KW-0227">DNA damage</keyword>
<keyword id="KW-0234">DNA repair</keyword>
<keyword id="KW-0235">DNA replication</keyword>
<keyword id="KW-0239">DNA-directed DNA polymerase</keyword>
<keyword id="KW-0548">Nucleotidyltransferase</keyword>
<keyword id="KW-0808">Transferase</keyword>
<dbReference type="EC" id="2.7.7.7" evidence="1"/>
<dbReference type="EMBL" id="CP000094">
    <property type="protein sequence ID" value="ABA74887.1"/>
    <property type="molecule type" value="Genomic_DNA"/>
</dbReference>
<dbReference type="RefSeq" id="WP_011334532.1">
    <property type="nucleotide sequence ID" value="NC_007492.2"/>
</dbReference>
<dbReference type="SMR" id="Q3KBG7"/>
<dbReference type="KEGG" id="pfo:Pfl01_3149"/>
<dbReference type="eggNOG" id="COG0587">
    <property type="taxonomic scope" value="Bacteria"/>
</dbReference>
<dbReference type="HOGENOM" id="CLU_001600_4_0_6"/>
<dbReference type="Proteomes" id="UP000002704">
    <property type="component" value="Chromosome"/>
</dbReference>
<dbReference type="GO" id="GO:0005737">
    <property type="term" value="C:cytoplasm"/>
    <property type="evidence" value="ECO:0007669"/>
    <property type="project" value="UniProtKB-SubCell"/>
</dbReference>
<dbReference type="GO" id="GO:0008408">
    <property type="term" value="F:3'-5' exonuclease activity"/>
    <property type="evidence" value="ECO:0007669"/>
    <property type="project" value="InterPro"/>
</dbReference>
<dbReference type="GO" id="GO:0003887">
    <property type="term" value="F:DNA-directed DNA polymerase activity"/>
    <property type="evidence" value="ECO:0007669"/>
    <property type="project" value="UniProtKB-UniRule"/>
</dbReference>
<dbReference type="GO" id="GO:0003676">
    <property type="term" value="F:nucleic acid binding"/>
    <property type="evidence" value="ECO:0007669"/>
    <property type="project" value="InterPro"/>
</dbReference>
<dbReference type="GO" id="GO:0006281">
    <property type="term" value="P:DNA repair"/>
    <property type="evidence" value="ECO:0007669"/>
    <property type="project" value="UniProtKB-UniRule"/>
</dbReference>
<dbReference type="GO" id="GO:0006260">
    <property type="term" value="P:DNA replication"/>
    <property type="evidence" value="ECO:0007669"/>
    <property type="project" value="UniProtKB-KW"/>
</dbReference>
<dbReference type="CDD" id="cd04485">
    <property type="entry name" value="DnaE_OBF"/>
    <property type="match status" value="1"/>
</dbReference>
<dbReference type="CDD" id="cd07434">
    <property type="entry name" value="PHP_PolIIIA_DnaE2"/>
    <property type="match status" value="1"/>
</dbReference>
<dbReference type="Gene3D" id="1.10.150.870">
    <property type="match status" value="1"/>
</dbReference>
<dbReference type="Gene3D" id="3.20.20.140">
    <property type="entry name" value="Metal-dependent hydrolases"/>
    <property type="match status" value="1"/>
</dbReference>
<dbReference type="HAMAP" id="MF_01902">
    <property type="entry name" value="DNApol_error_prone"/>
    <property type="match status" value="1"/>
</dbReference>
<dbReference type="InterPro" id="IPR011708">
    <property type="entry name" value="DNA_pol3_alpha_NTPase_dom"/>
</dbReference>
<dbReference type="InterPro" id="IPR040982">
    <property type="entry name" value="DNA_pol3_finger"/>
</dbReference>
<dbReference type="InterPro" id="IPR023073">
    <property type="entry name" value="DnaE2"/>
</dbReference>
<dbReference type="InterPro" id="IPR004805">
    <property type="entry name" value="DnaE2/DnaE/PolC"/>
</dbReference>
<dbReference type="InterPro" id="IPR029460">
    <property type="entry name" value="DNAPol_HHH"/>
</dbReference>
<dbReference type="InterPro" id="IPR004365">
    <property type="entry name" value="NA-bd_OB_tRNA"/>
</dbReference>
<dbReference type="InterPro" id="IPR004013">
    <property type="entry name" value="PHP_dom"/>
</dbReference>
<dbReference type="InterPro" id="IPR003141">
    <property type="entry name" value="Pol/His_phosphatase_N"/>
</dbReference>
<dbReference type="InterPro" id="IPR016195">
    <property type="entry name" value="Pol/histidinol_Pase-like"/>
</dbReference>
<dbReference type="NCBIfam" id="TIGR00594">
    <property type="entry name" value="polc"/>
    <property type="match status" value="1"/>
</dbReference>
<dbReference type="NCBIfam" id="NF004225">
    <property type="entry name" value="PRK05672.1"/>
    <property type="match status" value="1"/>
</dbReference>
<dbReference type="PANTHER" id="PTHR32294">
    <property type="entry name" value="DNA POLYMERASE III SUBUNIT ALPHA"/>
    <property type="match status" value="1"/>
</dbReference>
<dbReference type="PANTHER" id="PTHR32294:SF4">
    <property type="entry name" value="ERROR-PRONE DNA POLYMERASE"/>
    <property type="match status" value="1"/>
</dbReference>
<dbReference type="Pfam" id="PF07733">
    <property type="entry name" value="DNA_pol3_alpha"/>
    <property type="match status" value="1"/>
</dbReference>
<dbReference type="Pfam" id="PF17657">
    <property type="entry name" value="DNA_pol3_finger"/>
    <property type="match status" value="1"/>
</dbReference>
<dbReference type="Pfam" id="PF14579">
    <property type="entry name" value="HHH_6"/>
    <property type="match status" value="1"/>
</dbReference>
<dbReference type="Pfam" id="PF02811">
    <property type="entry name" value="PHP"/>
    <property type="match status" value="1"/>
</dbReference>
<dbReference type="Pfam" id="PF01336">
    <property type="entry name" value="tRNA_anti-codon"/>
    <property type="match status" value="1"/>
</dbReference>
<dbReference type="SMART" id="SM00481">
    <property type="entry name" value="POLIIIAc"/>
    <property type="match status" value="1"/>
</dbReference>
<dbReference type="SUPFAM" id="SSF89550">
    <property type="entry name" value="PHP domain-like"/>
    <property type="match status" value="1"/>
</dbReference>
<organism>
    <name type="scientific">Pseudomonas fluorescens (strain Pf0-1)</name>
    <dbReference type="NCBI Taxonomy" id="205922"/>
    <lineage>
        <taxon>Bacteria</taxon>
        <taxon>Pseudomonadati</taxon>
        <taxon>Pseudomonadota</taxon>
        <taxon>Gammaproteobacteria</taxon>
        <taxon>Pseudomonadales</taxon>
        <taxon>Pseudomonadaceae</taxon>
        <taxon>Pseudomonas</taxon>
    </lineage>
</organism>
<sequence length="1025" mass="115238">MNQGYAELHCLSNFSFQRGASSALELFQRAKKHGYQALAITDECTLAGIVRAWQAAKSVELPLIIGSEIRIENGPKLVLLVENIEGYQALCGLITQARRRTQKGQYQILREDFSEPLPGLLVLWVPEAVDEVEEGRWLKQTFGERLWLAVQLHRGQNDQQRLAALLSLADELQIPAVASGDVHMHARGRRALQDTMTAIRHHVPVAEAGLRLHPNGERHLRSLDVLRELYPQTLLDESLKLARRCTFDLGELRYQYPKELVPEEHSASSWLRHLTEQGIAWRWPKGAQPKVLKQIDDELELIAELGYESYFLTVHDVVRFAREQKILCQGRGSAANSAVCFALGITEIDPDRTTLLFERFMSRERNEPPDIDVDFEHERREEVLQYVFRRYGRRRAALTAVVSTYHASGAIRDVAKALGLPPDQINALADCCGHWSDETPPVERLREGGFDPESPLLHRVLSLTGQLIGFPRHLSQHPGGFVISEQPLDTLVPVENAAMADRTIIQWDKDDLDAVGLLKVDILALGMLSAIRRCFDLLRRHRHQDLSLATIPPEDRPTYDMISRADTIGVFQIESRAQMSMLPRLRPQTFYDLVIEVAIVRPGPIQGGMVHPYLRRRNKEEEETYPSPELEVVLKRTLGVPLFQEQVMQIAIVAADYSPGEADQLRRSMAAWKRHGGLEPHKERLAAGMKKNGYSPEFAAQIFEQIKGFGSYGFPESHAASFALLTYASCWLKCHEPAAFACALINSWPMGFYSPDQILQDARRHHLQIRPVDVRASDWDCSLEPIAGEQPAIRMGLRMIKGFREEDARSIEKARARGAFADVADLGERAGLDSRAQALLADAGALRGLAGHRHRARWEVAGVQKQLGLFAGLPSQEEPDVLLPTPSVSEDLFTDYATLGTTLGPHPLTLLRNELRARRCRSSRDLLEVEHGRPVSVAGLVTGRQRPGTASGVTFVTLEDEFGNVNVVVWRDLAERQRQVLVGSQLLKVDGRWEREGEVRHLIAGRLSDLTPLLNGIRVQSRDFH</sequence>
<feature type="chain" id="PRO_1000070594" description="Error-prone DNA polymerase">
    <location>
        <begin position="1"/>
        <end position="1025"/>
    </location>
</feature>
<evidence type="ECO:0000255" key="1">
    <source>
        <dbReference type="HAMAP-Rule" id="MF_01902"/>
    </source>
</evidence>
<name>DNAE2_PSEPF</name>